<comment type="function">
    <text evidence="1">Self-assembles to form an icosahedral capsid with a T=16 symmetry, about 200 nm in diameter, and consisting of 150 hexons and 12 pentons (total of 162 capsomers). Hexons form the edges and faces of the capsid and are each composed of six MCP molecules. In contrast, one penton is found at each of the 12 vertices. Eleven of the pentons are MCP pentamers, while the last vertex is occupied by the portal complex. The capsid is surrounded by a layer of proteinaceous material designated the tegument which, in turn, is enclosed in an envelope of host cell-derived lipids containing virus-encoded glycoproteins.</text>
</comment>
<comment type="subunit">
    <text evidence="1">Homomultimer. Makes the hexons and eleven out of twelve pentons. Interacts with triplex proteins 1/TRX1 and 2/TRX2; adjacent capsomers are linked together in groups of three by triplexes, heterotrimeric complexes composed of one molecule of TRX1 and two molecules of TRX2. Interacts with scaffold protein; this interaction allows efficient MCP transport to the host nucleus. Interacts with capsid vertex component 2/CVC2. Interacts with the small capsomere-interacting protein/SCP.</text>
</comment>
<comment type="subcellular location">
    <subcellularLocation>
        <location evidence="1">Virion</location>
    </subcellularLocation>
    <subcellularLocation>
        <location evidence="1">Host nucleus</location>
    </subcellularLocation>
</comment>
<comment type="similarity">
    <text evidence="1">Belongs to the herpesviridae major capsid protein family.</text>
</comment>
<organismHost>
    <name type="scientific">Homo sapiens</name>
    <name type="common">Human</name>
    <dbReference type="NCBI Taxonomy" id="9606"/>
</organismHost>
<feature type="chain" id="PRO_0000406185" description="Major capsid protein">
    <location>
        <begin position="1"/>
        <end position="1374"/>
    </location>
</feature>
<evidence type="ECO:0000255" key="1">
    <source>
        <dbReference type="HAMAP-Rule" id="MF_04016"/>
    </source>
</evidence>
<name>MCP_HHV2H</name>
<keyword id="KW-0002">3D-structure</keyword>
<keyword id="KW-0167">Capsid protein</keyword>
<keyword id="KW-1048">Host nucleus</keyword>
<keyword id="KW-1185">Reference proteome</keyword>
<keyword id="KW-1147">T=16 icosahedral capsid protein</keyword>
<keyword id="KW-0946">Virion</keyword>
<organism>
    <name type="scientific">Human herpesvirus 2 (strain HG52)</name>
    <name type="common">HHV-2</name>
    <name type="synonym">Human herpes simplex virus 2</name>
    <dbReference type="NCBI Taxonomy" id="10315"/>
    <lineage>
        <taxon>Viruses</taxon>
        <taxon>Duplodnaviria</taxon>
        <taxon>Heunggongvirae</taxon>
        <taxon>Peploviricota</taxon>
        <taxon>Herviviricetes</taxon>
        <taxon>Herpesvirales</taxon>
        <taxon>Orthoherpesviridae</taxon>
        <taxon>Alphaherpesvirinae</taxon>
        <taxon>Simplexvirus</taxon>
        <taxon>Simplexvirus humanalpha2</taxon>
        <taxon>Human herpesvirus 2</taxon>
    </lineage>
</organism>
<dbReference type="EMBL" id="Z86099">
    <property type="protein sequence ID" value="CAB06743.1"/>
    <property type="molecule type" value="Genomic_DNA"/>
</dbReference>
<dbReference type="PDB" id="6M6G">
    <property type="method" value="EM"/>
    <property type="resolution" value="5.39 A"/>
    <property type="chains" value="B/C/D/E/F/I=1-1374"/>
</dbReference>
<dbReference type="PDB" id="6M6H">
    <property type="method" value="EM"/>
    <property type="resolution" value="4.50 A"/>
    <property type="chains" value="A/B/C/D/E/F=1-1374"/>
</dbReference>
<dbReference type="PDB" id="6M6I">
    <property type="method" value="EM"/>
    <property type="resolution" value="4.05 A"/>
    <property type="chains" value="A/B/C/D/E/F=1-1374"/>
</dbReference>
<dbReference type="PDBsum" id="6M6G"/>
<dbReference type="PDBsum" id="6M6H"/>
<dbReference type="PDBsum" id="6M6I"/>
<dbReference type="EMDB" id="EMD-30123"/>
<dbReference type="EMDB" id="EMD-30124"/>
<dbReference type="EMDB" id="EMD-30125"/>
<dbReference type="SMR" id="P89442"/>
<dbReference type="Proteomes" id="UP000001874">
    <property type="component" value="Segment"/>
</dbReference>
<dbReference type="GO" id="GO:0042025">
    <property type="term" value="C:host cell nucleus"/>
    <property type="evidence" value="ECO:0007669"/>
    <property type="project" value="UniProtKB-SubCell"/>
</dbReference>
<dbReference type="GO" id="GO:0039622">
    <property type="term" value="C:T=16 icosahedral viral capsid"/>
    <property type="evidence" value="ECO:0007669"/>
    <property type="project" value="UniProtKB-KW"/>
</dbReference>
<dbReference type="GO" id="GO:0005198">
    <property type="term" value="F:structural molecule activity"/>
    <property type="evidence" value="ECO:0007669"/>
    <property type="project" value="InterPro"/>
</dbReference>
<dbReference type="HAMAP" id="MF_04016">
    <property type="entry name" value="HSV_MCP"/>
    <property type="match status" value="1"/>
</dbReference>
<dbReference type="InterPro" id="IPR000912">
    <property type="entry name" value="Herpes_MCP"/>
</dbReference>
<dbReference type="InterPro" id="IPR023233">
    <property type="entry name" value="Herpes_MCP_upper_sf"/>
</dbReference>
<dbReference type="Pfam" id="PF03122">
    <property type="entry name" value="Herpes_MCP"/>
    <property type="match status" value="1"/>
</dbReference>
<dbReference type="PRINTS" id="PR00235">
    <property type="entry name" value="HSVCAPSIDMCP"/>
</dbReference>
<dbReference type="SUPFAM" id="SSF103417">
    <property type="entry name" value="Major capsid protein VP5"/>
    <property type="match status" value="1"/>
</dbReference>
<reference key="1">
    <citation type="journal article" date="1991" name="J. Gen. Virol.">
        <title>Comparative sequence analysis of the long repeat regions and adjoining parts of the long unique regions in the genomes of herpes simplex viruses types 1 and 2.</title>
        <authorList>
            <person name="McGeoch D.J."/>
            <person name="Cunningham C."/>
            <person name="McIntyre G."/>
            <person name="Dolan A."/>
        </authorList>
    </citation>
    <scope>NUCLEOTIDE SEQUENCE [LARGE SCALE GENOMIC DNA]</scope>
</reference>
<accession>P89442</accession>
<sequence>MAAPARDPPGYRYAAAILPTGSILSTIEVASHRRLFDFFAAVRSDENSLYDVEFDALLGSYCNTLSLVRFLELGLSVACVCTKFPELAYMNEGRVQFEVHQPLIARDGPHPVEQPVHNYMTKVIDRRALNAAFSLATEAIALLTGEALDGTGISLHRQLRAIQQLARNVQAVLGAFERGTADQMLHVLLEKAPPLALLLPMQRYLDNGRLATRVARATLVAELKRSFCDTSFFLGKAGHRREAIEAWLVDLTTATQPSVAVPRLTHADTRGRPVDGVLVTTAAIKQRLLQSFLKVEDTEADVPVTYGEMVLNGANLVTALVMGKAVRSLDDVGRHLLDMQEEQLEANRETLDELESAPQTTRVRADLVAIGDRLVFLEALERRIYAATNVPYPLVGAMDLTFVLPLGLFNPAMERFAAHAGDLVPAPGHPEPRAFPPRQLFFWGKDHQVLRLSMENAVGTVCHPSLMNIDAAVGGVNHDPVEAANPYGAYVAAPAGPGADMQQRFLNAWRQRLAHGRVRWVAECQMTAEQFMQPDNANLALELHPAFDFFAGVADVELPGGEVPPAGPGAIQATWRVVNGNLPLALCPVAFRDARGLELGVGRHAMAPATIAAVRGAFEDRSYPAVFYLLQAAIHGNEHVFCALARLVTQCITSYWNNTRCAAFVNDYSLVSYIVTYLGGDLPEECMAVYRDLVAHVEALAQLVDDFTLPGPELGGQAQAELNHLMRDPALLPPLVWDCDGLMRHAALDRHRDCRIDAGGHEPVYAAACNVATADFNRNDGRLLHNTQARAADAADDRPHRPADWTVHHKIYYYVLVPAFSRGRCCTAGVRFDRVYATLQNMVVPEIAPGEECPSDPVTDPAHPLHPANLVANTVKRMFHNGRVVVDGPAMLTLQVLAHNMAERTTALLCSAAPDAGANTASTANMRIFDGALHAGVLLMAPQHLDHTIQNGEYFYVLPVHALFAGADHVANAPNFPPALRDLARDVPLVPPALGANYFSSIRQPVVQHARESAAGENALTYALMAGYFKMSPVALYHQLKTGLHPGFGFTVVRQDRFVTENVLFSERASEAYFLGQLQVARHETGGGVNFTLTQPRGNVDLGVGYTAVAATGTVRNPVTDMGNLPQNFYLGRGAPPLLDNAAAVYLRNAVVAGNRLGPAQPLPVFGCAQVPRRAGMDHGQDAVCEFIATPVATDINYFRRPCNPRGRAAGGVYAGDKEGDVIALMYDHGQSDPARPFAATANPWASQRFSYGDLLYNGAYHLNGASPVLSPCFKFFTAADITAKHRCLERLIVETGSAVSTATAASDVQFKRPPGCRELVEDPCGLFQEAYPITCASDPALLRSARDGEAHARETHFTQYLIYDASPLKGLSL</sequence>
<protein>
    <recommendedName>
        <fullName evidence="1">Major capsid protein</fullName>
        <shortName evidence="1">MCP</shortName>
    </recommendedName>
</protein>
<gene>
    <name evidence="1" type="primary">MCP</name>
    <name type="synonym">UL19</name>
</gene>
<proteinExistence type="evidence at protein level"/>